<name>DNLJ_ACIET</name>
<accession>B9MIW4</accession>
<evidence type="ECO:0000255" key="1">
    <source>
        <dbReference type="HAMAP-Rule" id="MF_01588"/>
    </source>
</evidence>
<evidence type="ECO:0000256" key="2">
    <source>
        <dbReference type="SAM" id="MobiDB-lite"/>
    </source>
</evidence>
<protein>
    <recommendedName>
        <fullName evidence="1">DNA ligase</fullName>
        <ecNumber evidence="1">6.5.1.2</ecNumber>
    </recommendedName>
    <alternativeName>
        <fullName evidence="1">Polydeoxyribonucleotide synthase [NAD(+)]</fullName>
    </alternativeName>
</protein>
<keyword id="KW-0227">DNA damage</keyword>
<keyword id="KW-0234">DNA repair</keyword>
<keyword id="KW-0235">DNA replication</keyword>
<keyword id="KW-0436">Ligase</keyword>
<keyword id="KW-0460">Magnesium</keyword>
<keyword id="KW-0464">Manganese</keyword>
<keyword id="KW-0479">Metal-binding</keyword>
<keyword id="KW-0520">NAD</keyword>
<keyword id="KW-1185">Reference proteome</keyword>
<keyword id="KW-0862">Zinc</keyword>
<comment type="function">
    <text evidence="1">DNA ligase that catalyzes the formation of phosphodiester linkages between 5'-phosphoryl and 3'-hydroxyl groups in double-stranded DNA using NAD as a coenzyme and as the energy source for the reaction. It is essential for DNA replication and repair of damaged DNA.</text>
</comment>
<comment type="catalytic activity">
    <reaction evidence="1">
        <text>NAD(+) + (deoxyribonucleotide)n-3'-hydroxyl + 5'-phospho-(deoxyribonucleotide)m = (deoxyribonucleotide)n+m + AMP + beta-nicotinamide D-nucleotide.</text>
        <dbReference type="EC" id="6.5.1.2"/>
    </reaction>
</comment>
<comment type="cofactor">
    <cofactor evidence="1">
        <name>Mg(2+)</name>
        <dbReference type="ChEBI" id="CHEBI:18420"/>
    </cofactor>
    <cofactor evidence="1">
        <name>Mn(2+)</name>
        <dbReference type="ChEBI" id="CHEBI:29035"/>
    </cofactor>
</comment>
<comment type="similarity">
    <text evidence="1">Belongs to the NAD-dependent DNA ligase family. LigA subfamily.</text>
</comment>
<proteinExistence type="inferred from homology"/>
<gene>
    <name evidence="1" type="primary">ligA</name>
    <name type="ordered locus">Dtpsy_1672</name>
</gene>
<organism>
    <name type="scientific">Acidovorax ebreus (strain TPSY)</name>
    <name type="common">Diaphorobacter sp. (strain TPSY)</name>
    <dbReference type="NCBI Taxonomy" id="535289"/>
    <lineage>
        <taxon>Bacteria</taxon>
        <taxon>Pseudomonadati</taxon>
        <taxon>Pseudomonadota</taxon>
        <taxon>Betaproteobacteria</taxon>
        <taxon>Burkholderiales</taxon>
        <taxon>Comamonadaceae</taxon>
        <taxon>Diaphorobacter</taxon>
    </lineage>
</organism>
<reference key="1">
    <citation type="submission" date="2009-01" db="EMBL/GenBank/DDBJ databases">
        <title>Complete sequence of Diaphorobacter sp. TPSY.</title>
        <authorList>
            <consortium name="US DOE Joint Genome Institute"/>
            <person name="Lucas S."/>
            <person name="Copeland A."/>
            <person name="Lapidus A."/>
            <person name="Glavina del Rio T."/>
            <person name="Tice H."/>
            <person name="Bruce D."/>
            <person name="Goodwin L."/>
            <person name="Pitluck S."/>
            <person name="Chertkov O."/>
            <person name="Brettin T."/>
            <person name="Detter J.C."/>
            <person name="Han C."/>
            <person name="Larimer F."/>
            <person name="Land M."/>
            <person name="Hauser L."/>
            <person name="Kyrpides N."/>
            <person name="Mikhailova N."/>
            <person name="Coates J.D."/>
        </authorList>
    </citation>
    <scope>NUCLEOTIDE SEQUENCE [LARGE SCALE GENOMIC DNA]</scope>
    <source>
        <strain>TPSY</strain>
    </source>
</reference>
<dbReference type="EC" id="6.5.1.2" evidence="1"/>
<dbReference type="EMBL" id="CP001392">
    <property type="protein sequence ID" value="ACM33130.1"/>
    <property type="molecule type" value="Genomic_DNA"/>
</dbReference>
<dbReference type="SMR" id="B9MIW4"/>
<dbReference type="KEGG" id="dia:Dtpsy_1672"/>
<dbReference type="eggNOG" id="COG0272">
    <property type="taxonomic scope" value="Bacteria"/>
</dbReference>
<dbReference type="HOGENOM" id="CLU_007764_2_1_4"/>
<dbReference type="Proteomes" id="UP000000450">
    <property type="component" value="Chromosome"/>
</dbReference>
<dbReference type="GO" id="GO:0005829">
    <property type="term" value="C:cytosol"/>
    <property type="evidence" value="ECO:0007669"/>
    <property type="project" value="TreeGrafter"/>
</dbReference>
<dbReference type="GO" id="GO:0003677">
    <property type="term" value="F:DNA binding"/>
    <property type="evidence" value="ECO:0007669"/>
    <property type="project" value="InterPro"/>
</dbReference>
<dbReference type="GO" id="GO:0003911">
    <property type="term" value="F:DNA ligase (NAD+) activity"/>
    <property type="evidence" value="ECO:0007669"/>
    <property type="project" value="UniProtKB-UniRule"/>
</dbReference>
<dbReference type="GO" id="GO:0046872">
    <property type="term" value="F:metal ion binding"/>
    <property type="evidence" value="ECO:0007669"/>
    <property type="project" value="UniProtKB-KW"/>
</dbReference>
<dbReference type="GO" id="GO:0006281">
    <property type="term" value="P:DNA repair"/>
    <property type="evidence" value="ECO:0007669"/>
    <property type="project" value="UniProtKB-KW"/>
</dbReference>
<dbReference type="GO" id="GO:0006260">
    <property type="term" value="P:DNA replication"/>
    <property type="evidence" value="ECO:0007669"/>
    <property type="project" value="UniProtKB-KW"/>
</dbReference>
<dbReference type="CDD" id="cd00114">
    <property type="entry name" value="LIGANc"/>
    <property type="match status" value="1"/>
</dbReference>
<dbReference type="FunFam" id="1.10.150.20:FF:000006">
    <property type="entry name" value="DNA ligase"/>
    <property type="match status" value="1"/>
</dbReference>
<dbReference type="FunFam" id="1.10.150.20:FF:000007">
    <property type="entry name" value="DNA ligase"/>
    <property type="match status" value="1"/>
</dbReference>
<dbReference type="FunFam" id="1.10.287.610:FF:000002">
    <property type="entry name" value="DNA ligase"/>
    <property type="match status" value="1"/>
</dbReference>
<dbReference type="FunFam" id="2.40.50.140:FF:000012">
    <property type="entry name" value="DNA ligase"/>
    <property type="match status" value="1"/>
</dbReference>
<dbReference type="FunFam" id="3.30.470.30:FF:000001">
    <property type="entry name" value="DNA ligase"/>
    <property type="match status" value="1"/>
</dbReference>
<dbReference type="FunFam" id="3.40.50.10190:FF:000054">
    <property type="entry name" value="DNA ligase"/>
    <property type="match status" value="1"/>
</dbReference>
<dbReference type="Gene3D" id="6.20.10.30">
    <property type="match status" value="1"/>
</dbReference>
<dbReference type="Gene3D" id="1.10.150.20">
    <property type="entry name" value="5' to 3' exonuclease, C-terminal subdomain"/>
    <property type="match status" value="2"/>
</dbReference>
<dbReference type="Gene3D" id="3.40.50.10190">
    <property type="entry name" value="BRCT domain"/>
    <property type="match status" value="1"/>
</dbReference>
<dbReference type="Gene3D" id="3.30.470.30">
    <property type="entry name" value="DNA ligase/mRNA capping enzyme"/>
    <property type="match status" value="1"/>
</dbReference>
<dbReference type="Gene3D" id="1.10.287.610">
    <property type="entry name" value="Helix hairpin bin"/>
    <property type="match status" value="1"/>
</dbReference>
<dbReference type="Gene3D" id="2.40.50.140">
    <property type="entry name" value="Nucleic acid-binding proteins"/>
    <property type="match status" value="1"/>
</dbReference>
<dbReference type="HAMAP" id="MF_01588">
    <property type="entry name" value="DNA_ligase_A"/>
    <property type="match status" value="1"/>
</dbReference>
<dbReference type="InterPro" id="IPR001357">
    <property type="entry name" value="BRCT_dom"/>
</dbReference>
<dbReference type="InterPro" id="IPR036420">
    <property type="entry name" value="BRCT_dom_sf"/>
</dbReference>
<dbReference type="InterPro" id="IPR041663">
    <property type="entry name" value="DisA/LigA_HHH"/>
</dbReference>
<dbReference type="InterPro" id="IPR001679">
    <property type="entry name" value="DNA_ligase"/>
</dbReference>
<dbReference type="InterPro" id="IPR018239">
    <property type="entry name" value="DNA_ligase_AS"/>
</dbReference>
<dbReference type="InterPro" id="IPR033136">
    <property type="entry name" value="DNA_ligase_CS"/>
</dbReference>
<dbReference type="InterPro" id="IPR013839">
    <property type="entry name" value="DNAligase_adenylation"/>
</dbReference>
<dbReference type="InterPro" id="IPR013840">
    <property type="entry name" value="DNAligase_N"/>
</dbReference>
<dbReference type="InterPro" id="IPR003583">
    <property type="entry name" value="Hlx-hairpin-Hlx_DNA-bd_motif"/>
</dbReference>
<dbReference type="InterPro" id="IPR012340">
    <property type="entry name" value="NA-bd_OB-fold"/>
</dbReference>
<dbReference type="InterPro" id="IPR004150">
    <property type="entry name" value="NAD_DNA_ligase_OB"/>
</dbReference>
<dbReference type="InterPro" id="IPR010994">
    <property type="entry name" value="RuvA_2-like"/>
</dbReference>
<dbReference type="InterPro" id="IPR004149">
    <property type="entry name" value="Znf_DNAligase_C4"/>
</dbReference>
<dbReference type="NCBIfam" id="TIGR00575">
    <property type="entry name" value="dnlj"/>
    <property type="match status" value="1"/>
</dbReference>
<dbReference type="NCBIfam" id="NF005932">
    <property type="entry name" value="PRK07956.1"/>
    <property type="match status" value="1"/>
</dbReference>
<dbReference type="PANTHER" id="PTHR23389">
    <property type="entry name" value="CHROMOSOME TRANSMISSION FIDELITY FACTOR 18"/>
    <property type="match status" value="1"/>
</dbReference>
<dbReference type="PANTHER" id="PTHR23389:SF9">
    <property type="entry name" value="DNA LIGASE"/>
    <property type="match status" value="1"/>
</dbReference>
<dbReference type="Pfam" id="PF00533">
    <property type="entry name" value="BRCT"/>
    <property type="match status" value="1"/>
</dbReference>
<dbReference type="Pfam" id="PF01653">
    <property type="entry name" value="DNA_ligase_aden"/>
    <property type="match status" value="1"/>
</dbReference>
<dbReference type="Pfam" id="PF03120">
    <property type="entry name" value="DNA_ligase_OB"/>
    <property type="match status" value="1"/>
</dbReference>
<dbReference type="Pfam" id="PF03119">
    <property type="entry name" value="DNA_ligase_ZBD"/>
    <property type="match status" value="1"/>
</dbReference>
<dbReference type="Pfam" id="PF12826">
    <property type="entry name" value="HHH_2"/>
    <property type="match status" value="1"/>
</dbReference>
<dbReference type="Pfam" id="PF14520">
    <property type="entry name" value="HHH_5"/>
    <property type="match status" value="1"/>
</dbReference>
<dbReference type="PIRSF" id="PIRSF001604">
    <property type="entry name" value="LigA"/>
    <property type="match status" value="1"/>
</dbReference>
<dbReference type="SMART" id="SM00292">
    <property type="entry name" value="BRCT"/>
    <property type="match status" value="1"/>
</dbReference>
<dbReference type="SMART" id="SM00278">
    <property type="entry name" value="HhH1"/>
    <property type="match status" value="3"/>
</dbReference>
<dbReference type="SMART" id="SM00532">
    <property type="entry name" value="LIGANc"/>
    <property type="match status" value="1"/>
</dbReference>
<dbReference type="SUPFAM" id="SSF52113">
    <property type="entry name" value="BRCT domain"/>
    <property type="match status" value="1"/>
</dbReference>
<dbReference type="SUPFAM" id="SSF56091">
    <property type="entry name" value="DNA ligase/mRNA capping enzyme, catalytic domain"/>
    <property type="match status" value="1"/>
</dbReference>
<dbReference type="SUPFAM" id="SSF50249">
    <property type="entry name" value="Nucleic acid-binding proteins"/>
    <property type="match status" value="1"/>
</dbReference>
<dbReference type="SUPFAM" id="SSF47781">
    <property type="entry name" value="RuvA domain 2-like"/>
    <property type="match status" value="1"/>
</dbReference>
<dbReference type="PROSITE" id="PS50172">
    <property type="entry name" value="BRCT"/>
    <property type="match status" value="1"/>
</dbReference>
<dbReference type="PROSITE" id="PS01055">
    <property type="entry name" value="DNA_LIGASE_N1"/>
    <property type="match status" value="1"/>
</dbReference>
<dbReference type="PROSITE" id="PS01056">
    <property type="entry name" value="DNA_LIGASE_N2"/>
    <property type="match status" value="1"/>
</dbReference>
<sequence>MGPGLTLSGMTEQSSLFPAPAPKGSALVAAKIKALREQLNRWAHEYYVQDTPSVPDAEYDRAFQELQALEGAYPDLVTPDSPTQRVLGAVLDGLTPVRHRVPMLSIRTETDTEASGAQAFDARVRRELKLPPDAPPVEYVAEPKFDGLAMSLRYEGGRLVQAATRGDGEVGEDVTHNVRTIRQIPLSLPAGVPRVLEVRGEVYMRRADFDALNERQREKGDKTFVNPRNAAAGAVRQLDSGITAQRPLSFFAYGLGEVTPAAEGGPDFGTHFGMLQQLKEWGFPVAAQVQIAQGASELIAFHQRVGAERDALPYDIDGVVYKVNSLALQRQLGFVTREPRWAVAHKYPAQEMVTRVEGIDVQVGRTGKLTPVARLAPVFVGGVTVTNATLHNLFELRRKKVRVGDQVIVRRAGDVIPEVVGVVPAGAGLAVLAGSDALVDAASSADGTAPAQPLAGPRQPYVPNFRMPRQCPICGSAVVREPGEVNHRCSGGLFCPAQRKQAVLHFAQRRAMDIEGLGEKLVDQLVEGHVIRTLPDLYRLGLSSLAQLDRMAEKSAQNVLDALDKSKRTTLARFLFGLGIRHVGEATAKDLARHFGRLDAIMDAGVEQLLQVNDVGPVVAEAIHTFFAQPHNREVVEQLRACGVTWDESEPAAAATLPLAGMTVVLTGTLPTLGRDAAKDLLESAGAKVAGSVSKKTHYVVAGADAGSKLAKAQELGIPVLDEDGLRALLRGAPPNAGGG</sequence>
<feature type="chain" id="PRO_0000380367" description="DNA ligase">
    <location>
        <begin position="1"/>
        <end position="740"/>
    </location>
</feature>
<feature type="domain" description="BRCT" evidence="1">
    <location>
        <begin position="654"/>
        <end position="740"/>
    </location>
</feature>
<feature type="region of interest" description="Disordered" evidence="2">
    <location>
        <begin position="1"/>
        <end position="20"/>
    </location>
</feature>
<feature type="active site" description="N6-AMP-lysine intermediate" evidence="1">
    <location>
        <position position="144"/>
    </location>
</feature>
<feature type="binding site" evidence="1">
    <location>
        <begin position="56"/>
        <end position="60"/>
    </location>
    <ligand>
        <name>NAD(+)</name>
        <dbReference type="ChEBI" id="CHEBI:57540"/>
    </ligand>
</feature>
<feature type="binding site" evidence="1">
    <location>
        <begin position="105"/>
        <end position="106"/>
    </location>
    <ligand>
        <name>NAD(+)</name>
        <dbReference type="ChEBI" id="CHEBI:57540"/>
    </ligand>
</feature>
<feature type="binding site" evidence="1">
    <location>
        <position position="142"/>
    </location>
    <ligand>
        <name>NAD(+)</name>
        <dbReference type="ChEBI" id="CHEBI:57540"/>
    </ligand>
</feature>
<feature type="binding site" evidence="1">
    <location>
        <position position="165"/>
    </location>
    <ligand>
        <name>NAD(+)</name>
        <dbReference type="ChEBI" id="CHEBI:57540"/>
    </ligand>
</feature>
<feature type="binding site" evidence="1">
    <location>
        <position position="201"/>
    </location>
    <ligand>
        <name>NAD(+)</name>
        <dbReference type="ChEBI" id="CHEBI:57540"/>
    </ligand>
</feature>
<feature type="binding site" evidence="1">
    <location>
        <position position="322"/>
    </location>
    <ligand>
        <name>NAD(+)</name>
        <dbReference type="ChEBI" id="CHEBI:57540"/>
    </ligand>
</feature>
<feature type="binding site" evidence="1">
    <location>
        <position position="346"/>
    </location>
    <ligand>
        <name>NAD(+)</name>
        <dbReference type="ChEBI" id="CHEBI:57540"/>
    </ligand>
</feature>
<feature type="binding site" evidence="1">
    <location>
        <position position="471"/>
    </location>
    <ligand>
        <name>Zn(2+)</name>
        <dbReference type="ChEBI" id="CHEBI:29105"/>
    </ligand>
</feature>
<feature type="binding site" evidence="1">
    <location>
        <position position="474"/>
    </location>
    <ligand>
        <name>Zn(2+)</name>
        <dbReference type="ChEBI" id="CHEBI:29105"/>
    </ligand>
</feature>
<feature type="binding site" evidence="1">
    <location>
        <position position="489"/>
    </location>
    <ligand>
        <name>Zn(2+)</name>
        <dbReference type="ChEBI" id="CHEBI:29105"/>
    </ligand>
</feature>
<feature type="binding site" evidence="1">
    <location>
        <position position="495"/>
    </location>
    <ligand>
        <name>Zn(2+)</name>
        <dbReference type="ChEBI" id="CHEBI:29105"/>
    </ligand>
</feature>